<dbReference type="EC" id="3.6.1.31" evidence="1"/>
<dbReference type="EMBL" id="AP009493">
    <property type="protein sequence ID" value="BAG22923.1"/>
    <property type="molecule type" value="Genomic_DNA"/>
</dbReference>
<dbReference type="RefSeq" id="WP_003970410.1">
    <property type="nucleotide sequence ID" value="NC_010572.1"/>
</dbReference>
<dbReference type="SMR" id="B1W4A6"/>
<dbReference type="KEGG" id="sgr:SGR_6094"/>
<dbReference type="eggNOG" id="COG0140">
    <property type="taxonomic scope" value="Bacteria"/>
</dbReference>
<dbReference type="HOGENOM" id="CLU_123337_2_1_11"/>
<dbReference type="UniPathway" id="UPA00031">
    <property type="reaction ID" value="UER00007"/>
</dbReference>
<dbReference type="Proteomes" id="UP000001685">
    <property type="component" value="Chromosome"/>
</dbReference>
<dbReference type="GO" id="GO:0005737">
    <property type="term" value="C:cytoplasm"/>
    <property type="evidence" value="ECO:0007669"/>
    <property type="project" value="UniProtKB-SubCell"/>
</dbReference>
<dbReference type="GO" id="GO:0005524">
    <property type="term" value="F:ATP binding"/>
    <property type="evidence" value="ECO:0007669"/>
    <property type="project" value="UniProtKB-KW"/>
</dbReference>
<dbReference type="GO" id="GO:0004636">
    <property type="term" value="F:phosphoribosyl-ATP diphosphatase activity"/>
    <property type="evidence" value="ECO:0007669"/>
    <property type="project" value="UniProtKB-UniRule"/>
</dbReference>
<dbReference type="GO" id="GO:0000105">
    <property type="term" value="P:L-histidine biosynthetic process"/>
    <property type="evidence" value="ECO:0007669"/>
    <property type="project" value="UniProtKB-UniRule"/>
</dbReference>
<dbReference type="CDD" id="cd11547">
    <property type="entry name" value="NTP-PPase_HisE"/>
    <property type="match status" value="1"/>
</dbReference>
<dbReference type="Gene3D" id="1.10.287.1080">
    <property type="entry name" value="MazG-like"/>
    <property type="match status" value="1"/>
</dbReference>
<dbReference type="HAMAP" id="MF_01020">
    <property type="entry name" value="HisE"/>
    <property type="match status" value="1"/>
</dbReference>
<dbReference type="InterPro" id="IPR008179">
    <property type="entry name" value="HisE"/>
</dbReference>
<dbReference type="InterPro" id="IPR021130">
    <property type="entry name" value="PRib-ATP_PPHydrolase-like"/>
</dbReference>
<dbReference type="NCBIfam" id="TIGR03188">
    <property type="entry name" value="histidine_hisI"/>
    <property type="match status" value="1"/>
</dbReference>
<dbReference type="NCBIfam" id="NF001610">
    <property type="entry name" value="PRK00400.1-1"/>
    <property type="match status" value="1"/>
</dbReference>
<dbReference type="PANTHER" id="PTHR42945">
    <property type="entry name" value="HISTIDINE BIOSYNTHESIS BIFUNCTIONAL PROTEIN"/>
    <property type="match status" value="1"/>
</dbReference>
<dbReference type="PANTHER" id="PTHR42945:SF1">
    <property type="entry name" value="HISTIDINE BIOSYNTHESIS BIFUNCTIONAL PROTEIN HIS7"/>
    <property type="match status" value="1"/>
</dbReference>
<dbReference type="Pfam" id="PF01503">
    <property type="entry name" value="PRA-PH"/>
    <property type="match status" value="1"/>
</dbReference>
<dbReference type="SUPFAM" id="SSF101386">
    <property type="entry name" value="all-alpha NTP pyrophosphatases"/>
    <property type="match status" value="1"/>
</dbReference>
<reference key="1">
    <citation type="journal article" date="2008" name="J. Bacteriol.">
        <title>Genome sequence of the streptomycin-producing microorganism Streptomyces griseus IFO 13350.</title>
        <authorList>
            <person name="Ohnishi Y."/>
            <person name="Ishikawa J."/>
            <person name="Hara H."/>
            <person name="Suzuki H."/>
            <person name="Ikenoya M."/>
            <person name="Ikeda H."/>
            <person name="Yamashita A."/>
            <person name="Hattori M."/>
            <person name="Horinouchi S."/>
        </authorList>
    </citation>
    <scope>NUCLEOTIDE SEQUENCE [LARGE SCALE GENOMIC DNA]</scope>
    <source>
        <strain>JCM 4626 / CBS 651.72 / NBRC 13350 / KCC S-0626 / ISP 5235</strain>
    </source>
</reference>
<protein>
    <recommendedName>
        <fullName evidence="1">Phosphoribosyl-ATP pyrophosphatase</fullName>
        <shortName evidence="1">PRA-PH</shortName>
        <ecNumber evidence="1">3.6.1.31</ecNumber>
    </recommendedName>
</protein>
<evidence type="ECO:0000255" key="1">
    <source>
        <dbReference type="HAMAP-Rule" id="MF_01020"/>
    </source>
</evidence>
<feature type="chain" id="PRO_1000190391" description="Phosphoribosyl-ATP pyrophosphatase">
    <location>
        <begin position="1"/>
        <end position="90"/>
    </location>
</feature>
<gene>
    <name evidence="1" type="primary">hisE</name>
    <name type="ordered locus">SGR_6094</name>
</gene>
<keyword id="KW-0028">Amino-acid biosynthesis</keyword>
<keyword id="KW-0067">ATP-binding</keyword>
<keyword id="KW-0963">Cytoplasm</keyword>
<keyword id="KW-0368">Histidine biosynthesis</keyword>
<keyword id="KW-0378">Hydrolase</keyword>
<keyword id="KW-0547">Nucleotide-binding</keyword>
<accession>B1W4A6</accession>
<name>HIS2_STRGG</name>
<sequence>MANKTFEELFTELQLKAAEGDPATSRTAELVDKGVHAIGKKVVEEAAEVWMAAEYEGKEAAAEEISQLLYHVQVMMVARGISLDDVYAHL</sequence>
<proteinExistence type="inferred from homology"/>
<comment type="catalytic activity">
    <reaction evidence="1">
        <text>1-(5-phospho-beta-D-ribosyl)-ATP + H2O = 1-(5-phospho-beta-D-ribosyl)-5'-AMP + diphosphate + H(+)</text>
        <dbReference type="Rhea" id="RHEA:22828"/>
        <dbReference type="ChEBI" id="CHEBI:15377"/>
        <dbReference type="ChEBI" id="CHEBI:15378"/>
        <dbReference type="ChEBI" id="CHEBI:33019"/>
        <dbReference type="ChEBI" id="CHEBI:59457"/>
        <dbReference type="ChEBI" id="CHEBI:73183"/>
        <dbReference type="EC" id="3.6.1.31"/>
    </reaction>
</comment>
<comment type="pathway">
    <text evidence="1">Amino-acid biosynthesis; L-histidine biosynthesis; L-histidine from 5-phospho-alpha-D-ribose 1-diphosphate: step 2/9.</text>
</comment>
<comment type="subcellular location">
    <subcellularLocation>
        <location evidence="1">Cytoplasm</location>
    </subcellularLocation>
</comment>
<comment type="similarity">
    <text evidence="1">Belongs to the PRA-PH family.</text>
</comment>
<organism>
    <name type="scientific">Streptomyces griseus subsp. griseus (strain JCM 4626 / CBS 651.72 / NBRC 13350 / KCC S-0626 / ISP 5235)</name>
    <dbReference type="NCBI Taxonomy" id="455632"/>
    <lineage>
        <taxon>Bacteria</taxon>
        <taxon>Bacillati</taxon>
        <taxon>Actinomycetota</taxon>
        <taxon>Actinomycetes</taxon>
        <taxon>Kitasatosporales</taxon>
        <taxon>Streptomycetaceae</taxon>
        <taxon>Streptomyces</taxon>
    </lineage>
</organism>